<feature type="chain" id="PRO_0000195758" description="Xylose isomerase">
    <location>
        <begin position="1"/>
        <end position="436"/>
    </location>
</feature>
<feature type="active site" evidence="1">
    <location>
        <position position="100"/>
    </location>
</feature>
<feature type="active site" evidence="1">
    <location>
        <position position="103"/>
    </location>
</feature>
<feature type="binding site" evidence="1">
    <location>
        <position position="231"/>
    </location>
    <ligand>
        <name>Mg(2+)</name>
        <dbReference type="ChEBI" id="CHEBI:18420"/>
        <label>1</label>
    </ligand>
</feature>
<feature type="binding site" evidence="1">
    <location>
        <position position="267"/>
    </location>
    <ligand>
        <name>Mg(2+)</name>
        <dbReference type="ChEBI" id="CHEBI:18420"/>
        <label>1</label>
    </ligand>
</feature>
<feature type="binding site" evidence="1">
    <location>
        <position position="267"/>
    </location>
    <ligand>
        <name>Mg(2+)</name>
        <dbReference type="ChEBI" id="CHEBI:18420"/>
        <label>2</label>
    </ligand>
</feature>
<feature type="binding site" evidence="1">
    <location>
        <position position="270"/>
    </location>
    <ligand>
        <name>Mg(2+)</name>
        <dbReference type="ChEBI" id="CHEBI:18420"/>
        <label>2</label>
    </ligand>
</feature>
<feature type="binding site" evidence="1">
    <location>
        <position position="295"/>
    </location>
    <ligand>
        <name>Mg(2+)</name>
        <dbReference type="ChEBI" id="CHEBI:18420"/>
        <label>1</label>
    </ligand>
</feature>
<feature type="binding site" evidence="1">
    <location>
        <position position="306"/>
    </location>
    <ligand>
        <name>Mg(2+)</name>
        <dbReference type="ChEBI" id="CHEBI:18420"/>
        <label>2</label>
    </ligand>
</feature>
<feature type="binding site" evidence="1">
    <location>
        <position position="308"/>
    </location>
    <ligand>
        <name>Mg(2+)</name>
        <dbReference type="ChEBI" id="CHEBI:18420"/>
        <label>2</label>
    </ligand>
</feature>
<feature type="binding site" evidence="1">
    <location>
        <position position="338"/>
    </location>
    <ligand>
        <name>Mg(2+)</name>
        <dbReference type="ChEBI" id="CHEBI:18420"/>
        <label>1</label>
    </ligand>
</feature>
<reference key="1">
    <citation type="journal article" date="2001" name="Science">
        <title>The genome of the natural genetic engineer Agrobacterium tumefaciens C58.</title>
        <authorList>
            <person name="Wood D.W."/>
            <person name="Setubal J.C."/>
            <person name="Kaul R."/>
            <person name="Monks D.E."/>
            <person name="Kitajima J.P."/>
            <person name="Okura V.K."/>
            <person name="Zhou Y."/>
            <person name="Chen L."/>
            <person name="Wood G.E."/>
            <person name="Almeida N.F. Jr."/>
            <person name="Woo L."/>
            <person name="Chen Y."/>
            <person name="Paulsen I.T."/>
            <person name="Eisen J.A."/>
            <person name="Karp P.D."/>
            <person name="Bovee D. Sr."/>
            <person name="Chapman P."/>
            <person name="Clendenning J."/>
            <person name="Deatherage G."/>
            <person name="Gillet W."/>
            <person name="Grant C."/>
            <person name="Kutyavin T."/>
            <person name="Levy R."/>
            <person name="Li M.-J."/>
            <person name="McClelland E."/>
            <person name="Palmieri A."/>
            <person name="Raymond C."/>
            <person name="Rouse G."/>
            <person name="Saenphimmachak C."/>
            <person name="Wu Z."/>
            <person name="Romero P."/>
            <person name="Gordon D."/>
            <person name="Zhang S."/>
            <person name="Yoo H."/>
            <person name="Tao Y."/>
            <person name="Biddle P."/>
            <person name="Jung M."/>
            <person name="Krespan W."/>
            <person name="Perry M."/>
            <person name="Gordon-Kamm B."/>
            <person name="Liao L."/>
            <person name="Kim S."/>
            <person name="Hendrick C."/>
            <person name="Zhao Z.-Y."/>
            <person name="Dolan M."/>
            <person name="Chumley F."/>
            <person name="Tingey S.V."/>
            <person name="Tomb J.-F."/>
            <person name="Gordon M.P."/>
            <person name="Olson M.V."/>
            <person name="Nester E.W."/>
        </authorList>
    </citation>
    <scope>NUCLEOTIDE SEQUENCE [LARGE SCALE GENOMIC DNA]</scope>
    <source>
        <strain>C58 / ATCC 33970</strain>
    </source>
</reference>
<reference key="2">
    <citation type="journal article" date="2001" name="Science">
        <title>Genome sequence of the plant pathogen and biotechnology agent Agrobacterium tumefaciens C58.</title>
        <authorList>
            <person name="Goodner B."/>
            <person name="Hinkle G."/>
            <person name="Gattung S."/>
            <person name="Miller N."/>
            <person name="Blanchard M."/>
            <person name="Qurollo B."/>
            <person name="Goldman B.S."/>
            <person name="Cao Y."/>
            <person name="Askenazi M."/>
            <person name="Halling C."/>
            <person name="Mullin L."/>
            <person name="Houmiel K."/>
            <person name="Gordon J."/>
            <person name="Vaudin M."/>
            <person name="Iartchouk O."/>
            <person name="Epp A."/>
            <person name="Liu F."/>
            <person name="Wollam C."/>
            <person name="Allinger M."/>
            <person name="Doughty D."/>
            <person name="Scott C."/>
            <person name="Lappas C."/>
            <person name="Markelz B."/>
            <person name="Flanagan C."/>
            <person name="Crowell C."/>
            <person name="Gurson J."/>
            <person name="Lomo C."/>
            <person name="Sear C."/>
            <person name="Strub G."/>
            <person name="Cielo C."/>
            <person name="Slater S."/>
        </authorList>
    </citation>
    <scope>NUCLEOTIDE SEQUENCE [LARGE SCALE GENOMIC DNA]</scope>
    <source>
        <strain>C58 / ATCC 33970</strain>
    </source>
</reference>
<gene>
    <name evidence="1" type="primary">xylA</name>
    <name type="ordered locus">Atu4483</name>
    <name type="ORF">AGR_L_774</name>
</gene>
<sequence length="436" mass="48968">MSTGFFGDIAKIKYEGPDSTNPLAFRHYNPDEIVGGKRMEDHLRFAVAYWHTFTWPGGDPFGGQTFQRPWFEDTMQAAKLKADVAFEFFSLLGSPFYCFHDADVRPEGKNFAENTKNLNEIVDYFAQKQADTGVKLLWGTANLFSNRRFMSGAATNPDPDVFAFSAATVKTCMDATKTLGGANYVLWGGREGYETLLNTDLSRELDQLGRFLNLVVEYKYKIGFEGTILIEPKPQEPTKHQYDYDVATVYAFLQKNGLEKEVKVNIEQGHAILAGHSFEHELAMANAFGIFGSIDMNRNDYQSGWDTDQFPNNVPEMALAYYHVLAGGGFKNGGTNFDSKLRRQSLDPQDLLIGHIGGMDCCARGLKAAAKMIEDGALSKPLSERYAKWDSPEAQKMLRGELKLEEIAALVERDDINPEPKPGRQEYLENVVNRYV</sequence>
<organism>
    <name type="scientific">Agrobacterium fabrum (strain C58 / ATCC 33970)</name>
    <name type="common">Agrobacterium tumefaciens (strain C58)</name>
    <dbReference type="NCBI Taxonomy" id="176299"/>
    <lineage>
        <taxon>Bacteria</taxon>
        <taxon>Pseudomonadati</taxon>
        <taxon>Pseudomonadota</taxon>
        <taxon>Alphaproteobacteria</taxon>
        <taxon>Hyphomicrobiales</taxon>
        <taxon>Rhizobiaceae</taxon>
        <taxon>Rhizobium/Agrobacterium group</taxon>
        <taxon>Agrobacterium</taxon>
        <taxon>Agrobacterium tumefaciens complex</taxon>
    </lineage>
</organism>
<comment type="catalytic activity">
    <reaction evidence="1">
        <text>alpha-D-xylose = alpha-D-xylulofuranose</text>
        <dbReference type="Rhea" id="RHEA:22816"/>
        <dbReference type="ChEBI" id="CHEBI:28518"/>
        <dbReference type="ChEBI" id="CHEBI:188998"/>
        <dbReference type="EC" id="5.3.1.5"/>
    </reaction>
</comment>
<comment type="cofactor">
    <cofactor evidence="1">
        <name>Mg(2+)</name>
        <dbReference type="ChEBI" id="CHEBI:18420"/>
    </cofactor>
    <text evidence="1">Binds 2 magnesium ions per subunit.</text>
</comment>
<comment type="subunit">
    <text evidence="1">Homotetramer.</text>
</comment>
<comment type="subcellular location">
    <subcellularLocation>
        <location evidence="1">Cytoplasm</location>
    </subcellularLocation>
</comment>
<comment type="similarity">
    <text evidence="1">Belongs to the xylose isomerase family.</text>
</comment>
<accession>Q8U7G6</accession>
<accession>Q7CV26</accession>
<dbReference type="EC" id="5.3.1.5" evidence="1"/>
<dbReference type="EMBL" id="AE007870">
    <property type="protein sequence ID" value="AAK88959.2"/>
    <property type="molecule type" value="Genomic_DNA"/>
</dbReference>
<dbReference type="PIR" id="AG3107">
    <property type="entry name" value="AG3107"/>
</dbReference>
<dbReference type="PIR" id="E98179">
    <property type="entry name" value="E98179"/>
</dbReference>
<dbReference type="RefSeq" id="NP_356174.2">
    <property type="nucleotide sequence ID" value="NC_003063.2"/>
</dbReference>
<dbReference type="RefSeq" id="WP_010973891.1">
    <property type="nucleotide sequence ID" value="NC_003063.2"/>
</dbReference>
<dbReference type="SMR" id="Q8U7G6"/>
<dbReference type="STRING" id="176299.Atu4483"/>
<dbReference type="EnsemblBacteria" id="AAK88959">
    <property type="protein sequence ID" value="AAK88959"/>
    <property type="gene ID" value="Atu4483"/>
</dbReference>
<dbReference type="GeneID" id="1136357"/>
<dbReference type="KEGG" id="atu:Atu4483"/>
<dbReference type="PATRIC" id="fig|176299.10.peg.4292"/>
<dbReference type="eggNOG" id="COG2115">
    <property type="taxonomic scope" value="Bacteria"/>
</dbReference>
<dbReference type="HOGENOM" id="CLU_037261_1_0_5"/>
<dbReference type="OrthoDB" id="9763981at2"/>
<dbReference type="PhylomeDB" id="Q8U7G6"/>
<dbReference type="BioCyc" id="AGRO:ATU4483-MONOMER"/>
<dbReference type="Proteomes" id="UP000000813">
    <property type="component" value="Chromosome linear"/>
</dbReference>
<dbReference type="GO" id="GO:0005737">
    <property type="term" value="C:cytoplasm"/>
    <property type="evidence" value="ECO:0007669"/>
    <property type="project" value="UniProtKB-SubCell"/>
</dbReference>
<dbReference type="GO" id="GO:0000287">
    <property type="term" value="F:magnesium ion binding"/>
    <property type="evidence" value="ECO:0007669"/>
    <property type="project" value="UniProtKB-UniRule"/>
</dbReference>
<dbReference type="GO" id="GO:0009045">
    <property type="term" value="F:xylose isomerase activity"/>
    <property type="evidence" value="ECO:0007669"/>
    <property type="project" value="UniProtKB-UniRule"/>
</dbReference>
<dbReference type="GO" id="GO:0042732">
    <property type="term" value="P:D-xylose metabolic process"/>
    <property type="evidence" value="ECO:0007669"/>
    <property type="project" value="UniProtKB-UniRule"/>
</dbReference>
<dbReference type="Gene3D" id="3.20.20.150">
    <property type="entry name" value="Divalent-metal-dependent TIM barrel enzymes"/>
    <property type="match status" value="1"/>
</dbReference>
<dbReference type="HAMAP" id="MF_00455">
    <property type="entry name" value="Xylose_isom_A"/>
    <property type="match status" value="1"/>
</dbReference>
<dbReference type="InterPro" id="IPR036237">
    <property type="entry name" value="Xyl_isomerase-like_sf"/>
</dbReference>
<dbReference type="InterPro" id="IPR013022">
    <property type="entry name" value="Xyl_isomerase-like_TIM-brl"/>
</dbReference>
<dbReference type="InterPro" id="IPR013452">
    <property type="entry name" value="Xylose_isom_bac"/>
</dbReference>
<dbReference type="InterPro" id="IPR001998">
    <property type="entry name" value="Xylose_isomerase"/>
</dbReference>
<dbReference type="NCBIfam" id="NF003998">
    <property type="entry name" value="PRK05474.1"/>
    <property type="match status" value="1"/>
</dbReference>
<dbReference type="NCBIfam" id="TIGR02630">
    <property type="entry name" value="xylose_isom_A"/>
    <property type="match status" value="1"/>
</dbReference>
<dbReference type="PANTHER" id="PTHR48408">
    <property type="match status" value="1"/>
</dbReference>
<dbReference type="PANTHER" id="PTHR48408:SF1">
    <property type="entry name" value="XYLOSE ISOMERASE"/>
    <property type="match status" value="1"/>
</dbReference>
<dbReference type="Pfam" id="PF01261">
    <property type="entry name" value="AP_endonuc_2"/>
    <property type="match status" value="1"/>
</dbReference>
<dbReference type="PRINTS" id="PR00688">
    <property type="entry name" value="XYLOSISMRASE"/>
</dbReference>
<dbReference type="SUPFAM" id="SSF51658">
    <property type="entry name" value="Xylose isomerase-like"/>
    <property type="match status" value="1"/>
</dbReference>
<dbReference type="PROSITE" id="PS51415">
    <property type="entry name" value="XYLOSE_ISOMERASE"/>
    <property type="match status" value="1"/>
</dbReference>
<proteinExistence type="inferred from homology"/>
<protein>
    <recommendedName>
        <fullName evidence="1">Xylose isomerase</fullName>
        <ecNumber evidence="1">5.3.1.5</ecNumber>
    </recommendedName>
</protein>
<evidence type="ECO:0000255" key="1">
    <source>
        <dbReference type="HAMAP-Rule" id="MF_00455"/>
    </source>
</evidence>
<name>XYLA_AGRFC</name>
<keyword id="KW-0119">Carbohydrate metabolism</keyword>
<keyword id="KW-0963">Cytoplasm</keyword>
<keyword id="KW-0413">Isomerase</keyword>
<keyword id="KW-0460">Magnesium</keyword>
<keyword id="KW-0479">Metal-binding</keyword>
<keyword id="KW-1185">Reference proteome</keyword>
<keyword id="KW-0859">Xylose metabolism</keyword>